<evidence type="ECO:0000250" key="1">
    <source>
        <dbReference type="UniProtKB" id="Q99J78"/>
    </source>
</evidence>
<evidence type="ECO:0000255" key="2">
    <source>
        <dbReference type="PROSITE-ProRule" id="PRU00226"/>
    </source>
</evidence>
<evidence type="ECO:0000256" key="3">
    <source>
        <dbReference type="SAM" id="MobiDB-lite"/>
    </source>
</evidence>
<evidence type="ECO:0000305" key="4"/>
<feature type="chain" id="PRO_0000321917" description="Differentially expressed in FDCP 8 homolog B">
    <location>
        <begin position="1"/>
        <end position="443"/>
    </location>
</feature>
<feature type="zinc finger region" description="Phorbol-ester/DAG-type 1" evidence="2">
    <location>
        <begin position="134"/>
        <end position="185"/>
    </location>
</feature>
<feature type="zinc finger region" description="Phorbol-ester/DAG-type 2" evidence="2">
    <location>
        <begin position="364"/>
        <end position="424"/>
    </location>
</feature>
<feature type="region of interest" description="Disordered" evidence="3">
    <location>
        <begin position="14"/>
        <end position="49"/>
    </location>
</feature>
<feature type="compositionally biased region" description="Basic and acidic residues" evidence="3">
    <location>
        <begin position="17"/>
        <end position="30"/>
    </location>
</feature>
<feature type="compositionally biased region" description="Polar residues" evidence="3">
    <location>
        <begin position="31"/>
        <end position="45"/>
    </location>
</feature>
<dbReference type="EMBL" id="BC056097">
    <property type="protein sequence ID" value="AAH56097.1"/>
    <property type="molecule type" value="mRNA"/>
</dbReference>
<dbReference type="RefSeq" id="NP_001080885.1">
    <property type="nucleotide sequence ID" value="NM_001087416.1"/>
</dbReference>
<dbReference type="SMR" id="Q7T0P6"/>
<dbReference type="DNASU" id="380579"/>
<dbReference type="GeneID" id="380579"/>
<dbReference type="KEGG" id="xla:380579"/>
<dbReference type="AGR" id="Xenbase:XB-GENE-967887"/>
<dbReference type="CTD" id="380579"/>
<dbReference type="Xenbase" id="XB-GENE-967887">
    <property type="gene designation" value="def8.S"/>
</dbReference>
<dbReference type="OrthoDB" id="1918044at2759"/>
<dbReference type="Proteomes" id="UP000186698">
    <property type="component" value="Chromosome 4S"/>
</dbReference>
<dbReference type="Bgee" id="380579">
    <property type="expression patterns" value="Expressed in oocyte and 19 other cell types or tissues"/>
</dbReference>
<dbReference type="GO" id="GO:0008270">
    <property type="term" value="F:zinc ion binding"/>
    <property type="evidence" value="ECO:0007669"/>
    <property type="project" value="UniProtKB-KW"/>
</dbReference>
<dbReference type="GO" id="GO:0032418">
    <property type="term" value="P:lysosome localization"/>
    <property type="evidence" value="ECO:0000250"/>
    <property type="project" value="UniProtKB"/>
</dbReference>
<dbReference type="GO" id="GO:0045780">
    <property type="term" value="P:positive regulation of bone resorption"/>
    <property type="evidence" value="ECO:0000250"/>
    <property type="project" value="UniProtKB"/>
</dbReference>
<dbReference type="GO" id="GO:1900029">
    <property type="term" value="P:positive regulation of ruffle assembly"/>
    <property type="evidence" value="ECO:0000250"/>
    <property type="project" value="UniProtKB"/>
</dbReference>
<dbReference type="CDD" id="cd20819">
    <property type="entry name" value="C1_DEF8"/>
    <property type="match status" value="1"/>
</dbReference>
<dbReference type="FunFam" id="3.30.60.20:FF:000042">
    <property type="entry name" value="differentially expressed in FDCP 8 homolog isoform X2"/>
    <property type="match status" value="1"/>
</dbReference>
<dbReference type="Gene3D" id="3.30.60.20">
    <property type="match status" value="1"/>
</dbReference>
<dbReference type="InterPro" id="IPR046349">
    <property type="entry name" value="C1-like_sf"/>
</dbReference>
<dbReference type="InterPro" id="IPR051366">
    <property type="entry name" value="DEF8"/>
</dbReference>
<dbReference type="InterPro" id="IPR047983">
    <property type="entry name" value="DEF8_C1"/>
</dbReference>
<dbReference type="InterPro" id="IPR036280">
    <property type="entry name" value="Multihaem_cyt_sf"/>
</dbReference>
<dbReference type="InterPro" id="IPR002219">
    <property type="entry name" value="PE/DAG-bd"/>
</dbReference>
<dbReference type="InterPro" id="IPR025258">
    <property type="entry name" value="RH_dom"/>
</dbReference>
<dbReference type="PANTHER" id="PTHR12326:SF3">
    <property type="entry name" value="DIFFERENTIALLY EXPRESSED IN FDCP 8 HOMOLOG"/>
    <property type="match status" value="1"/>
</dbReference>
<dbReference type="PANTHER" id="PTHR12326">
    <property type="entry name" value="PLECKSTRIN HOMOLOGY DOMAIN CONTAINING PROTEIN"/>
    <property type="match status" value="1"/>
</dbReference>
<dbReference type="Pfam" id="PF00130">
    <property type="entry name" value="C1_1"/>
    <property type="match status" value="1"/>
</dbReference>
<dbReference type="Pfam" id="PF13901">
    <property type="entry name" value="RH_dom"/>
    <property type="match status" value="1"/>
</dbReference>
<dbReference type="SMART" id="SM00109">
    <property type="entry name" value="C1"/>
    <property type="match status" value="2"/>
</dbReference>
<dbReference type="SMART" id="SM01175">
    <property type="entry name" value="DUF4206"/>
    <property type="match status" value="1"/>
</dbReference>
<dbReference type="SUPFAM" id="SSF57889">
    <property type="entry name" value="Cysteine-rich domain"/>
    <property type="match status" value="1"/>
</dbReference>
<dbReference type="SUPFAM" id="SSF48695">
    <property type="entry name" value="Multiheme cytochromes"/>
    <property type="match status" value="1"/>
</dbReference>
<dbReference type="PROSITE" id="PS00479">
    <property type="entry name" value="ZF_DAG_PE_1"/>
    <property type="match status" value="1"/>
</dbReference>
<dbReference type="PROSITE" id="PS50081">
    <property type="entry name" value="ZF_DAG_PE_2"/>
    <property type="match status" value="1"/>
</dbReference>
<comment type="function">
    <text evidence="1">Positively regulates lysosome peripheral distribution and ruffled border formation in osteoclasts. Involved in bone resorption.</text>
</comment>
<comment type="similarity">
    <text evidence="4">Belongs to the DEF8 family.</text>
</comment>
<name>DFI8B_XENLA</name>
<protein>
    <recommendedName>
        <fullName>Differentially expressed in FDCP 8 homolog B</fullName>
        <shortName>DEF-8-B</shortName>
    </recommendedName>
</protein>
<gene>
    <name type="primary">def8-b</name>
</gene>
<accession>Q7T0P6</accession>
<proteinExistence type="evidence at transcript level"/>
<organism>
    <name type="scientific">Xenopus laevis</name>
    <name type="common">African clawed frog</name>
    <dbReference type="NCBI Taxonomy" id="8355"/>
    <lineage>
        <taxon>Eukaryota</taxon>
        <taxon>Metazoa</taxon>
        <taxon>Chordata</taxon>
        <taxon>Craniata</taxon>
        <taxon>Vertebrata</taxon>
        <taxon>Euteleostomi</taxon>
        <taxon>Amphibia</taxon>
        <taxon>Batrachia</taxon>
        <taxon>Anura</taxon>
        <taxon>Pipoidea</taxon>
        <taxon>Pipidae</taxon>
        <taxon>Xenopodinae</taxon>
        <taxon>Xenopus</taxon>
        <taxon>Xenopus</taxon>
    </lineage>
</organism>
<keyword id="KW-0479">Metal-binding</keyword>
<keyword id="KW-1185">Reference proteome</keyword>
<keyword id="KW-0677">Repeat</keyword>
<keyword id="KW-0862">Zinc</keyword>
<keyword id="KW-0863">Zinc-finger</keyword>
<sequence>MEYDDKLVRFRQGHLNPFDKKGGAERHPADSETQPCKDSSTSSPLSVPEYNYPDRVMDLGVSEDHFSRPVGLFLASDVQQLRQAIEECKQEILELPENSDRQKDAVVRLIHLRLKLQELNDPLEDEPNLRVLLEHRFYKEKSKSVKHLCDKCSTFIWGLIQTWYTCTGCSYSCHSKCLNLITKPCVRSKVSHQAEYELSICPEAGLDSQDYRCAECRTPISLRAVPSEARQCDYTGQYYCISCHWNDLAVIPARAIHNWDFEPCKVSRYSMRYLALMLGRPVLKLREINPLLFNYVEELVEIRKLRQDILLMKPYFITCKEAMEDRLLLQLQDRQHFVENDDMYSLQDLLDISSGRLGCSLTEIHTTFAKHIKLDCERCQAKGFMCELCKEGDILFPFDSHTSVCQDCAAVFHRDCYYENSTSCPRCMRLNLRKQVQNPGAEP</sequence>
<reference key="1">
    <citation type="submission" date="2003-08" db="EMBL/GenBank/DDBJ databases">
        <authorList>
            <consortium name="NIH - Xenopus Gene Collection (XGC) project"/>
        </authorList>
    </citation>
    <scope>NUCLEOTIDE SEQUENCE [LARGE SCALE MRNA]</scope>
    <source>
        <tissue>Ovary</tissue>
    </source>
</reference>